<dbReference type="EMBL" id="CP000813">
    <property type="protein sequence ID" value="ABV63980.1"/>
    <property type="molecule type" value="Genomic_DNA"/>
</dbReference>
<dbReference type="RefSeq" id="WP_012011547.1">
    <property type="nucleotide sequence ID" value="NZ_VEIS01000002.1"/>
</dbReference>
<dbReference type="SMR" id="A8FIB3"/>
<dbReference type="STRING" id="315750.BPUM_3327"/>
<dbReference type="GeneID" id="5622617"/>
<dbReference type="KEGG" id="bpu:BPUM_3327"/>
<dbReference type="eggNOG" id="COG0224">
    <property type="taxonomic scope" value="Bacteria"/>
</dbReference>
<dbReference type="HOGENOM" id="CLU_050669_0_1_9"/>
<dbReference type="OrthoDB" id="9812769at2"/>
<dbReference type="Proteomes" id="UP000001355">
    <property type="component" value="Chromosome"/>
</dbReference>
<dbReference type="GO" id="GO:0005886">
    <property type="term" value="C:plasma membrane"/>
    <property type="evidence" value="ECO:0007669"/>
    <property type="project" value="UniProtKB-SubCell"/>
</dbReference>
<dbReference type="GO" id="GO:0045259">
    <property type="term" value="C:proton-transporting ATP synthase complex"/>
    <property type="evidence" value="ECO:0007669"/>
    <property type="project" value="UniProtKB-KW"/>
</dbReference>
<dbReference type="GO" id="GO:0005524">
    <property type="term" value="F:ATP binding"/>
    <property type="evidence" value="ECO:0007669"/>
    <property type="project" value="UniProtKB-UniRule"/>
</dbReference>
<dbReference type="GO" id="GO:0046933">
    <property type="term" value="F:proton-transporting ATP synthase activity, rotational mechanism"/>
    <property type="evidence" value="ECO:0007669"/>
    <property type="project" value="UniProtKB-UniRule"/>
</dbReference>
<dbReference type="GO" id="GO:0042777">
    <property type="term" value="P:proton motive force-driven plasma membrane ATP synthesis"/>
    <property type="evidence" value="ECO:0007669"/>
    <property type="project" value="UniProtKB-UniRule"/>
</dbReference>
<dbReference type="CDD" id="cd12151">
    <property type="entry name" value="F1-ATPase_gamma"/>
    <property type="match status" value="1"/>
</dbReference>
<dbReference type="FunFam" id="1.10.287.80:FF:000010">
    <property type="entry name" value="ATP synthase gamma chain"/>
    <property type="match status" value="1"/>
</dbReference>
<dbReference type="FunFam" id="3.40.1380.10:FF:000002">
    <property type="entry name" value="ATP synthase gamma chain"/>
    <property type="match status" value="1"/>
</dbReference>
<dbReference type="Gene3D" id="3.40.1380.10">
    <property type="match status" value="1"/>
</dbReference>
<dbReference type="Gene3D" id="1.10.287.80">
    <property type="entry name" value="ATP synthase, gamma subunit, helix hairpin domain"/>
    <property type="match status" value="1"/>
</dbReference>
<dbReference type="HAMAP" id="MF_00815">
    <property type="entry name" value="ATP_synth_gamma_bact"/>
    <property type="match status" value="1"/>
</dbReference>
<dbReference type="InterPro" id="IPR035968">
    <property type="entry name" value="ATP_synth_F1_ATPase_gsu"/>
</dbReference>
<dbReference type="InterPro" id="IPR000131">
    <property type="entry name" value="ATP_synth_F1_gsu"/>
</dbReference>
<dbReference type="InterPro" id="IPR023632">
    <property type="entry name" value="ATP_synth_F1_gsu_CS"/>
</dbReference>
<dbReference type="NCBIfam" id="TIGR01146">
    <property type="entry name" value="ATPsyn_F1gamma"/>
    <property type="match status" value="1"/>
</dbReference>
<dbReference type="NCBIfam" id="NF004147">
    <property type="entry name" value="PRK05621.2-1"/>
    <property type="match status" value="1"/>
</dbReference>
<dbReference type="PANTHER" id="PTHR11693">
    <property type="entry name" value="ATP SYNTHASE GAMMA CHAIN"/>
    <property type="match status" value="1"/>
</dbReference>
<dbReference type="PANTHER" id="PTHR11693:SF22">
    <property type="entry name" value="ATP SYNTHASE SUBUNIT GAMMA, MITOCHONDRIAL"/>
    <property type="match status" value="1"/>
</dbReference>
<dbReference type="Pfam" id="PF00231">
    <property type="entry name" value="ATP-synt"/>
    <property type="match status" value="1"/>
</dbReference>
<dbReference type="PRINTS" id="PR00126">
    <property type="entry name" value="ATPASEGAMMA"/>
</dbReference>
<dbReference type="SUPFAM" id="SSF52943">
    <property type="entry name" value="ATP synthase (F1-ATPase), gamma subunit"/>
    <property type="match status" value="1"/>
</dbReference>
<dbReference type="PROSITE" id="PS00153">
    <property type="entry name" value="ATPASE_GAMMA"/>
    <property type="match status" value="1"/>
</dbReference>
<sequence length="288" mass="31472">MASLRDIKSRITSTKKSSQITKAMQMVSAAKLNRAENNAKSFVPYMEKIQEVVAAIATGTSAKHPMLLSRPVKKTGYLVITSDRGLAGPFNSSILRAAYQTIQSRHQSADEYAVIVIGKIGRDFFKKRGIPVISEVTGLGDEVAFADIKELASSTVQMFSDEAFDELYMFYNHFVSAISQEVTEKKLLPLTDISAAATPNKRSASYEFEPSEEEILEVLLPQYAESLIFGALLDSKASEHAARMTAMKSATDNAKELIDSLTLSYNRARQAAITQEITEIVGGAAALE</sequence>
<keyword id="KW-0066">ATP synthesis</keyword>
<keyword id="KW-1003">Cell membrane</keyword>
<keyword id="KW-0139">CF(1)</keyword>
<keyword id="KW-0375">Hydrogen ion transport</keyword>
<keyword id="KW-0406">Ion transport</keyword>
<keyword id="KW-0472">Membrane</keyword>
<keyword id="KW-0813">Transport</keyword>
<accession>A8FIB3</accession>
<feature type="chain" id="PRO_1000062289" description="ATP synthase gamma chain">
    <location>
        <begin position="1"/>
        <end position="288"/>
    </location>
</feature>
<name>ATPG_BACP2</name>
<proteinExistence type="inferred from homology"/>
<evidence type="ECO:0000255" key="1">
    <source>
        <dbReference type="HAMAP-Rule" id="MF_00815"/>
    </source>
</evidence>
<organism>
    <name type="scientific">Bacillus pumilus (strain SAFR-032)</name>
    <dbReference type="NCBI Taxonomy" id="315750"/>
    <lineage>
        <taxon>Bacteria</taxon>
        <taxon>Bacillati</taxon>
        <taxon>Bacillota</taxon>
        <taxon>Bacilli</taxon>
        <taxon>Bacillales</taxon>
        <taxon>Bacillaceae</taxon>
        <taxon>Bacillus</taxon>
    </lineage>
</organism>
<protein>
    <recommendedName>
        <fullName evidence="1">ATP synthase gamma chain</fullName>
    </recommendedName>
    <alternativeName>
        <fullName evidence="1">ATP synthase F1 sector gamma subunit</fullName>
    </alternativeName>
    <alternativeName>
        <fullName evidence="1">F-ATPase gamma subunit</fullName>
    </alternativeName>
</protein>
<reference key="1">
    <citation type="journal article" date="2007" name="PLoS ONE">
        <title>Paradoxical DNA repair and peroxide resistance gene conservation in Bacillus pumilus SAFR-032.</title>
        <authorList>
            <person name="Gioia J."/>
            <person name="Yerrapragada S."/>
            <person name="Qin X."/>
            <person name="Jiang H."/>
            <person name="Igboeli O.C."/>
            <person name="Muzny D."/>
            <person name="Dugan-Rocha S."/>
            <person name="Ding Y."/>
            <person name="Hawes A."/>
            <person name="Liu W."/>
            <person name="Perez L."/>
            <person name="Kovar C."/>
            <person name="Dinh H."/>
            <person name="Lee S."/>
            <person name="Nazareth L."/>
            <person name="Blyth P."/>
            <person name="Holder M."/>
            <person name="Buhay C."/>
            <person name="Tirumalai M.R."/>
            <person name="Liu Y."/>
            <person name="Dasgupta I."/>
            <person name="Bokhetache L."/>
            <person name="Fujita M."/>
            <person name="Karouia F."/>
            <person name="Eswara Moorthy P."/>
            <person name="Siefert J."/>
            <person name="Uzman A."/>
            <person name="Buzumbo P."/>
            <person name="Verma A."/>
            <person name="Zwiya H."/>
            <person name="McWilliams B.D."/>
            <person name="Olowu A."/>
            <person name="Clinkenbeard K.D."/>
            <person name="Newcombe D."/>
            <person name="Golebiewski L."/>
            <person name="Petrosino J.F."/>
            <person name="Nicholson W.L."/>
            <person name="Fox G.E."/>
            <person name="Venkateswaran K."/>
            <person name="Highlander S.K."/>
            <person name="Weinstock G.M."/>
        </authorList>
    </citation>
    <scope>NUCLEOTIDE SEQUENCE [LARGE SCALE GENOMIC DNA]</scope>
    <source>
        <strain>SAFR-032</strain>
    </source>
</reference>
<comment type="function">
    <text evidence="1">Produces ATP from ADP in the presence of a proton gradient across the membrane. The gamma chain is believed to be important in regulating ATPase activity and the flow of protons through the CF(0) complex.</text>
</comment>
<comment type="subunit">
    <text evidence="1">F-type ATPases have 2 components, CF(1) - the catalytic core - and CF(0) - the membrane proton channel. CF(1) has five subunits: alpha(3), beta(3), gamma(1), delta(1), epsilon(1). CF(0) has three main subunits: a, b and c.</text>
</comment>
<comment type="subcellular location">
    <subcellularLocation>
        <location evidence="1">Cell membrane</location>
        <topology evidence="1">Peripheral membrane protein</topology>
    </subcellularLocation>
</comment>
<comment type="similarity">
    <text evidence="1">Belongs to the ATPase gamma chain family.</text>
</comment>
<gene>
    <name evidence="1" type="primary">atpG</name>
    <name type="ordered locus">BPUM_3327</name>
</gene>